<accession>Q0SN06</accession>
<accession>G0ISE4</accession>
<comment type="function">
    <text evidence="1">Located on the platform of the 30S subunit, it bridges several disparate RNA helices of the 16S rRNA. Forms part of the Shine-Dalgarno cleft in the 70S ribosome.</text>
</comment>
<comment type="subunit">
    <text evidence="1">Part of the 30S ribosomal subunit. Interacts with proteins S7 and S18. Binds to IF-3.</text>
</comment>
<comment type="similarity">
    <text evidence="1">Belongs to the universal ribosomal protein uS11 family.</text>
</comment>
<feature type="chain" id="PRO_0000294723" description="Small ribosomal subunit protein uS11">
    <location>
        <begin position="1"/>
        <end position="130"/>
    </location>
</feature>
<proteinExistence type="inferred from homology"/>
<protein>
    <recommendedName>
        <fullName evidence="1">Small ribosomal subunit protein uS11</fullName>
    </recommendedName>
    <alternativeName>
        <fullName evidence="2">30S ribosomal protein S11</fullName>
    </alternativeName>
</protein>
<dbReference type="EMBL" id="CP000395">
    <property type="protein sequence ID" value="ABH01772.1"/>
    <property type="molecule type" value="Genomic_DNA"/>
</dbReference>
<dbReference type="EMBL" id="CP002933">
    <property type="protein sequence ID" value="AEL69725.1"/>
    <property type="molecule type" value="Genomic_DNA"/>
</dbReference>
<dbReference type="RefSeq" id="WP_002557092.1">
    <property type="nucleotide sequence ID" value="NZ_CP160066.1"/>
</dbReference>
<dbReference type="SMR" id="Q0SN06"/>
<dbReference type="STRING" id="29518.BLA32_01755"/>
<dbReference type="GeneID" id="83865976"/>
<dbReference type="KEGG" id="baf:BAPKO_0529"/>
<dbReference type="KEGG" id="bafz:BafPKo_0517"/>
<dbReference type="PATRIC" id="fig|390236.22.peg.498"/>
<dbReference type="eggNOG" id="COG0100">
    <property type="taxonomic scope" value="Bacteria"/>
</dbReference>
<dbReference type="HOGENOM" id="CLU_072439_5_0_12"/>
<dbReference type="OrthoDB" id="9806415at2"/>
<dbReference type="Proteomes" id="UP000005216">
    <property type="component" value="Chromosome"/>
</dbReference>
<dbReference type="GO" id="GO:1990904">
    <property type="term" value="C:ribonucleoprotein complex"/>
    <property type="evidence" value="ECO:0007669"/>
    <property type="project" value="UniProtKB-KW"/>
</dbReference>
<dbReference type="GO" id="GO:0005840">
    <property type="term" value="C:ribosome"/>
    <property type="evidence" value="ECO:0007669"/>
    <property type="project" value="UniProtKB-KW"/>
</dbReference>
<dbReference type="GO" id="GO:0019843">
    <property type="term" value="F:rRNA binding"/>
    <property type="evidence" value="ECO:0007669"/>
    <property type="project" value="UniProtKB-UniRule"/>
</dbReference>
<dbReference type="GO" id="GO:0003735">
    <property type="term" value="F:structural constituent of ribosome"/>
    <property type="evidence" value="ECO:0007669"/>
    <property type="project" value="InterPro"/>
</dbReference>
<dbReference type="GO" id="GO:0006412">
    <property type="term" value="P:translation"/>
    <property type="evidence" value="ECO:0007669"/>
    <property type="project" value="UniProtKB-UniRule"/>
</dbReference>
<dbReference type="FunFam" id="3.30.420.80:FF:000010">
    <property type="entry name" value="30S ribosomal protein S11"/>
    <property type="match status" value="1"/>
</dbReference>
<dbReference type="Gene3D" id="3.30.420.80">
    <property type="entry name" value="Ribosomal protein S11"/>
    <property type="match status" value="1"/>
</dbReference>
<dbReference type="HAMAP" id="MF_01310">
    <property type="entry name" value="Ribosomal_uS11"/>
    <property type="match status" value="1"/>
</dbReference>
<dbReference type="InterPro" id="IPR001971">
    <property type="entry name" value="Ribosomal_uS11"/>
</dbReference>
<dbReference type="InterPro" id="IPR019981">
    <property type="entry name" value="Ribosomal_uS11_bac-type"/>
</dbReference>
<dbReference type="InterPro" id="IPR018102">
    <property type="entry name" value="Ribosomal_uS11_CS"/>
</dbReference>
<dbReference type="InterPro" id="IPR036967">
    <property type="entry name" value="Ribosomal_uS11_sf"/>
</dbReference>
<dbReference type="NCBIfam" id="NF003698">
    <property type="entry name" value="PRK05309.1"/>
    <property type="match status" value="1"/>
</dbReference>
<dbReference type="NCBIfam" id="TIGR03632">
    <property type="entry name" value="uS11_bact"/>
    <property type="match status" value="1"/>
</dbReference>
<dbReference type="PANTHER" id="PTHR11759">
    <property type="entry name" value="40S RIBOSOMAL PROTEIN S14/30S RIBOSOMAL PROTEIN S11"/>
    <property type="match status" value="1"/>
</dbReference>
<dbReference type="Pfam" id="PF00411">
    <property type="entry name" value="Ribosomal_S11"/>
    <property type="match status" value="1"/>
</dbReference>
<dbReference type="PIRSF" id="PIRSF002131">
    <property type="entry name" value="Ribosomal_S11"/>
    <property type="match status" value="1"/>
</dbReference>
<dbReference type="SUPFAM" id="SSF53137">
    <property type="entry name" value="Translational machinery components"/>
    <property type="match status" value="1"/>
</dbReference>
<dbReference type="PROSITE" id="PS00054">
    <property type="entry name" value="RIBOSOMAL_S11"/>
    <property type="match status" value="1"/>
</dbReference>
<gene>
    <name evidence="1" type="primary">rpsK</name>
    <name type="ordered locus">BAPKO_0529</name>
    <name type="ordered locus">BafPKo_0517</name>
</gene>
<keyword id="KW-0687">Ribonucleoprotein</keyword>
<keyword id="KW-0689">Ribosomal protein</keyword>
<keyword id="KW-0694">RNA-binding</keyword>
<keyword id="KW-0699">rRNA-binding</keyword>
<name>RS11_BORAP</name>
<reference key="1">
    <citation type="journal article" date="2006" name="BMC Genomics">
        <title>Comparative genome analysis: selection pressure on the Borrelia vls cassettes is essential for infectivity.</title>
        <authorList>
            <person name="Gloeckner G."/>
            <person name="Schulte-Spechtel U."/>
            <person name="Schilhabel M."/>
            <person name="Felder M."/>
            <person name="Suehnel J."/>
            <person name="Wilske B."/>
            <person name="Platzer M."/>
        </authorList>
    </citation>
    <scope>NUCLEOTIDE SEQUENCE [LARGE SCALE GENOMIC DNA]</scope>
    <source>
        <strain>PKo</strain>
    </source>
</reference>
<reference key="2">
    <citation type="journal article" date="2011" name="J. Bacteriol.">
        <title>Whole-genome sequences of two Borrelia afzelii and two Borrelia garinii Lyme disease agent isolates.</title>
        <authorList>
            <person name="Casjens S.R."/>
            <person name="Mongodin E.F."/>
            <person name="Qiu W.G."/>
            <person name="Dunn J.J."/>
            <person name="Luft B.J."/>
            <person name="Fraser-Liggett C.M."/>
            <person name="Schutzer S.E."/>
        </authorList>
    </citation>
    <scope>NUCLEOTIDE SEQUENCE [LARGE SCALE GENOMIC DNA]</scope>
    <source>
        <strain>PKo</strain>
    </source>
</reference>
<evidence type="ECO:0000255" key="1">
    <source>
        <dbReference type="HAMAP-Rule" id="MF_01310"/>
    </source>
</evidence>
<evidence type="ECO:0000305" key="2"/>
<sequence length="130" mass="13879">MSAKLSTNSKKKIKRNIGEGNVYIQATFNNTIVTVSDIKGNALAWASAGGMGFKGAKKSTPYAAQITAESALNKVRDFGINYVHVYIKGPGIGRESAIRAIGSIGMTVKSISDITPIPHNGCRPKKTRRV</sequence>
<organism>
    <name type="scientific">Borreliella afzelii (strain PKo)</name>
    <name type="common">Borrelia afzelii</name>
    <dbReference type="NCBI Taxonomy" id="390236"/>
    <lineage>
        <taxon>Bacteria</taxon>
        <taxon>Pseudomonadati</taxon>
        <taxon>Spirochaetota</taxon>
        <taxon>Spirochaetia</taxon>
        <taxon>Spirochaetales</taxon>
        <taxon>Borreliaceae</taxon>
        <taxon>Borreliella</taxon>
    </lineage>
</organism>